<organism>
    <name type="scientific">Murine adenovirus A serotype 1</name>
    <name type="common">MAdV-1</name>
    <name type="synonym">Murine adenovirus 1</name>
    <dbReference type="NCBI Taxonomy" id="10530"/>
    <lineage>
        <taxon>Viruses</taxon>
        <taxon>Varidnaviria</taxon>
        <taxon>Bamfordvirae</taxon>
        <taxon>Preplasmiviricota</taxon>
        <taxon>Tectiliviricetes</taxon>
        <taxon>Rowavirales</taxon>
        <taxon>Adenoviridae</taxon>
        <taxon>Mastadenovirus</taxon>
        <taxon>Murine mastadenovirus A</taxon>
    </lineage>
</organism>
<dbReference type="EMBL" id="U95843">
    <property type="protein sequence ID" value="AAB53755.1"/>
    <property type="molecule type" value="Genomic_DNA"/>
</dbReference>
<dbReference type="GO" id="GO:0043657">
    <property type="term" value="C:host cell"/>
    <property type="evidence" value="ECO:0007669"/>
    <property type="project" value="GOC"/>
</dbReference>
<dbReference type="GO" id="GO:0044196">
    <property type="term" value="C:host cell nucleolus"/>
    <property type="evidence" value="ECO:0007669"/>
    <property type="project" value="UniProtKB-SubCell"/>
</dbReference>
<dbReference type="GO" id="GO:0019028">
    <property type="term" value="C:viral capsid"/>
    <property type="evidence" value="ECO:0007669"/>
    <property type="project" value="InterPro"/>
</dbReference>
<dbReference type="GO" id="GO:0003677">
    <property type="term" value="F:DNA binding"/>
    <property type="evidence" value="ECO:0007669"/>
    <property type="project" value="UniProtKB-UniRule"/>
</dbReference>
<dbReference type="GO" id="GO:0046718">
    <property type="term" value="P:symbiont entry into host cell"/>
    <property type="evidence" value="ECO:0007669"/>
    <property type="project" value="UniProtKB-UniRule"/>
</dbReference>
<dbReference type="GO" id="GO:0075732">
    <property type="term" value="P:viral penetration into host nucleus"/>
    <property type="evidence" value="ECO:0007669"/>
    <property type="project" value="UniProtKB-UniRule"/>
</dbReference>
<dbReference type="HAMAP" id="MF_04056">
    <property type="entry name" value="ADV_PVII"/>
    <property type="match status" value="1"/>
</dbReference>
<dbReference type="InterPro" id="IPR004912">
    <property type="entry name" value="Adeno_VII"/>
</dbReference>
<dbReference type="Pfam" id="PF03228">
    <property type="entry name" value="Adeno_VII"/>
    <property type="match status" value="1"/>
</dbReference>
<sequence length="199" mass="21927">MSILISPSDNTGWGLGTGKMYGGARKRSAEHPVHVRSYWRAAWGSRNRRRVATVAAEDAEAPQLEDVAQAPATVPIVRRHRRRVGGSARTRGLRKSARVRAAARAIVRAVNGAAAAAAPTVPASANFAAMVGAIANARAAYRHRRSRAGINPVPASRSTTRVRLPRTVRFHPSMGAFHRRWWRIHTRGRRKASVRRRRT</sequence>
<name>NP_ADEM1</name>
<protein>
    <recommendedName>
        <fullName evidence="1">Pre-histone-like nucleoprotein</fullName>
    </recommendedName>
    <alternativeName>
        <fullName evidence="1">Pre-core protein VII</fullName>
        <shortName evidence="1">pVII</shortName>
    </alternativeName>
    <component>
        <recommendedName>
            <fullName evidence="1">Histone-like nucleoprotein</fullName>
            <shortName evidence="1">NP</shortName>
        </recommendedName>
        <alternativeName>
            <fullName evidence="1">Core protein VII</fullName>
        </alternativeName>
    </component>
</protein>
<reference key="1">
    <citation type="submission" date="1997-05" db="EMBL/GenBank/DDBJ databases">
        <authorList>
            <person name="Meissner J.D."/>
            <person name="Hirsch G.N."/>
            <person name="Larue E.A."/>
            <person name="Fulcher R.A."/>
            <person name="Spindler K.R."/>
        </authorList>
    </citation>
    <scope>NUCLEOTIDE SEQUENCE [GENOMIC DNA]</scope>
</reference>
<comment type="function">
    <text evidence="1">Plays a role in the inhibition of host immune response within the nucleus. Interacts with cellular nucleosomes and immobilizes the host immune danger signal HMGB1 on chromatin. In turn, prevents HMGB1 release out of the cell and thus decreases inflammation. Also plays a role in the wrapping and condensation of the viral DNA. May also promote viral genome import into the nucleus.</text>
</comment>
<comment type="subunit">
    <text evidence="1">Interacts with the core-capsid bridging protein; this interaction bridges the virus core to the capsid. Interacts with host NPM1; this interaction might play a role in placing the pre-histone-like nucleoprotein on the viral DNA or regulating viral gene expression. Interacts with host HMGB1; this interaction inhibits host immune response.</text>
</comment>
<comment type="subcellular location">
    <molecule>Histone-like nucleoprotein</molecule>
    <subcellularLocation>
        <location evidence="1">Virion</location>
    </subcellularLocation>
    <text evidence="1">Located inside the capsid in association with the viral DNA (core). Present in about 1070 copies per virion.</text>
</comment>
<comment type="subcellular location">
    <molecule>Pre-histone-like nucleoprotein</molecule>
    <subcellularLocation>
        <location evidence="1">Host nucleus</location>
        <location evidence="1">Host nucleolus</location>
    </subcellularLocation>
</comment>
<comment type="induction">
    <text evidence="1">Expressed in the late phase of the viral replicative cycle.</text>
</comment>
<comment type="PTM">
    <text evidence="1">Cleaved near the N-terminus by the viral protease during virion maturation to form the mature protein.</text>
</comment>
<comment type="miscellaneous">
    <text evidence="1">All late proteins expressed from the major late promoter are produced by alternative splicing and alternative polyadenylation of the same gene giving rise to non-overlapping ORFs. A leader sequence is present in the N-terminus of all these mRNAs and is recognized by the viral shutoff protein to provide expression although conventional translation via ribosome scanning from the cap has been shut off in the host cell.</text>
</comment>
<comment type="similarity">
    <text evidence="1 2">Belongs to the adenoviridae histone-like nucleoprotein family.</text>
</comment>
<accession>O10440</accession>
<organismHost>
    <name type="scientific">Mus musculus</name>
    <name type="common">Mouse</name>
    <dbReference type="NCBI Taxonomy" id="10090"/>
</organismHost>
<keyword id="KW-0007">Acetylation</keyword>
<keyword id="KW-0238">DNA-binding</keyword>
<keyword id="KW-1048">Host nucleus</keyword>
<keyword id="KW-0945">Host-virus interaction</keyword>
<keyword id="KW-0426">Late protein</keyword>
<keyword id="KW-0597">Phosphoprotein</keyword>
<keyword id="KW-1163">Viral penetration into host nucleus</keyword>
<keyword id="KW-0946">Virion</keyword>
<keyword id="KW-1160">Virus entry into host cell</keyword>
<evidence type="ECO:0000255" key="1">
    <source>
        <dbReference type="HAMAP-Rule" id="MF_04056"/>
    </source>
</evidence>
<evidence type="ECO:0000305" key="2"/>
<gene>
    <name evidence="1" type="primary">L2</name>
</gene>
<proteinExistence type="inferred from homology"/>
<feature type="initiator methionine" description="Removed" evidence="1">
    <location>
        <position position="1"/>
    </location>
</feature>
<feature type="chain" id="PRO_0000421442" description="Pre-histone-like nucleoprotein" evidence="1">
    <location>
        <begin position="2"/>
        <end position="199"/>
    </location>
</feature>
<feature type="propeptide" id="PRO_0000036595" evidence="1">
    <location>
        <begin position="2"/>
        <end position="23"/>
    </location>
</feature>
<feature type="chain" id="PRO_0000036596" description="Histone-like nucleoprotein" evidence="1">
    <location>
        <begin position="24"/>
        <end position="199"/>
    </location>
</feature>
<feature type="short sequence motif" description="Nuclear localization signal" evidence="1">
    <location>
        <begin position="189"/>
        <end position="199"/>
    </location>
</feature>
<feature type="site" description="Cleavage; by viral protease" evidence="1">
    <location>
        <begin position="23"/>
        <end position="24"/>
    </location>
</feature>
<feature type="modified residue" description="N-acetylserine; by host" evidence="1">
    <location>
        <position position="2"/>
    </location>
</feature>
<feature type="modified residue" description="N6-acetyllysine; by host" evidence="1">
    <location>
        <position position="26"/>
    </location>
</feature>